<keyword id="KW-0028">Amino-acid biosynthesis</keyword>
<keyword id="KW-0067">ATP-binding</keyword>
<keyword id="KW-0963">Cytoplasm</keyword>
<keyword id="KW-0368">Histidine biosynthesis</keyword>
<keyword id="KW-0378">Hydrolase</keyword>
<keyword id="KW-0547">Nucleotide-binding</keyword>
<reference key="1">
    <citation type="submission" date="2007-03" db="EMBL/GenBank/DDBJ databases">
        <title>Complete sequence of chromosome of Methanococcus maripaludis C5.</title>
        <authorList>
            <consortium name="US DOE Joint Genome Institute"/>
            <person name="Copeland A."/>
            <person name="Lucas S."/>
            <person name="Lapidus A."/>
            <person name="Barry K."/>
            <person name="Glavina del Rio T."/>
            <person name="Dalin E."/>
            <person name="Tice H."/>
            <person name="Pitluck S."/>
            <person name="Chertkov O."/>
            <person name="Brettin T."/>
            <person name="Bruce D."/>
            <person name="Han C."/>
            <person name="Detter J.C."/>
            <person name="Schmutz J."/>
            <person name="Larimer F."/>
            <person name="Land M."/>
            <person name="Hauser L."/>
            <person name="Kyrpides N."/>
            <person name="Mikhailova N."/>
            <person name="Sieprawska-Lupa M."/>
            <person name="Whitman W.B."/>
            <person name="Richardson P."/>
        </authorList>
    </citation>
    <scope>NUCLEOTIDE SEQUENCE [LARGE SCALE GENOMIC DNA]</scope>
    <source>
        <strain>C5 / ATCC BAA-1333</strain>
    </source>
</reference>
<evidence type="ECO:0000255" key="1">
    <source>
        <dbReference type="HAMAP-Rule" id="MF_01020"/>
    </source>
</evidence>
<name>HIS2_METM5</name>
<gene>
    <name evidence="1" type="primary">hisE</name>
    <name type="ordered locus">MmarC5_1629</name>
</gene>
<accession>A4G0E2</accession>
<organism>
    <name type="scientific">Methanococcus maripaludis (strain C5 / ATCC BAA-1333)</name>
    <dbReference type="NCBI Taxonomy" id="402880"/>
    <lineage>
        <taxon>Archaea</taxon>
        <taxon>Methanobacteriati</taxon>
        <taxon>Methanobacteriota</taxon>
        <taxon>Methanomada group</taxon>
        <taxon>Methanococci</taxon>
        <taxon>Methanococcales</taxon>
        <taxon>Methanococcaceae</taxon>
        <taxon>Methanococcus</taxon>
    </lineage>
</organism>
<sequence length="96" mass="10928">MNVLKEVYSTIEKRIQEKPEGSYVVKITTDDKKTAVNKICEKVGEEAAEVILAAKDNNKAEIIYESADLIFHTMVLLAKSGITYEELSEEFKKRMK</sequence>
<dbReference type="EC" id="3.6.1.31" evidence="1"/>
<dbReference type="EMBL" id="CP000609">
    <property type="protein sequence ID" value="ABO35926.1"/>
    <property type="molecule type" value="Genomic_DNA"/>
</dbReference>
<dbReference type="RefSeq" id="WP_011869373.1">
    <property type="nucleotide sequence ID" value="NC_009135.1"/>
</dbReference>
<dbReference type="SMR" id="A4G0E2"/>
<dbReference type="STRING" id="402880.MmarC5_1629"/>
<dbReference type="GeneID" id="4928575"/>
<dbReference type="KEGG" id="mmq:MmarC5_1629"/>
<dbReference type="eggNOG" id="arCOG02677">
    <property type="taxonomic scope" value="Archaea"/>
</dbReference>
<dbReference type="HOGENOM" id="CLU_123337_0_0_2"/>
<dbReference type="OrthoDB" id="39686at2157"/>
<dbReference type="UniPathway" id="UPA00031">
    <property type="reaction ID" value="UER00007"/>
</dbReference>
<dbReference type="Proteomes" id="UP000000253">
    <property type="component" value="Chromosome"/>
</dbReference>
<dbReference type="GO" id="GO:0005737">
    <property type="term" value="C:cytoplasm"/>
    <property type="evidence" value="ECO:0007669"/>
    <property type="project" value="UniProtKB-SubCell"/>
</dbReference>
<dbReference type="GO" id="GO:0005524">
    <property type="term" value="F:ATP binding"/>
    <property type="evidence" value="ECO:0007669"/>
    <property type="project" value="UniProtKB-KW"/>
</dbReference>
<dbReference type="GO" id="GO:0004636">
    <property type="term" value="F:phosphoribosyl-ATP diphosphatase activity"/>
    <property type="evidence" value="ECO:0007669"/>
    <property type="project" value="UniProtKB-UniRule"/>
</dbReference>
<dbReference type="GO" id="GO:0000105">
    <property type="term" value="P:L-histidine biosynthetic process"/>
    <property type="evidence" value="ECO:0007669"/>
    <property type="project" value="UniProtKB-UniRule"/>
</dbReference>
<dbReference type="CDD" id="cd11534">
    <property type="entry name" value="NTP-PPase_HisIE_like"/>
    <property type="match status" value="1"/>
</dbReference>
<dbReference type="Gene3D" id="1.10.287.1080">
    <property type="entry name" value="MazG-like"/>
    <property type="match status" value="1"/>
</dbReference>
<dbReference type="HAMAP" id="MF_01020">
    <property type="entry name" value="HisE"/>
    <property type="match status" value="1"/>
</dbReference>
<dbReference type="InterPro" id="IPR008179">
    <property type="entry name" value="HisE"/>
</dbReference>
<dbReference type="InterPro" id="IPR021130">
    <property type="entry name" value="PRib-ATP_PPHydrolase-like"/>
</dbReference>
<dbReference type="NCBIfam" id="TIGR03188">
    <property type="entry name" value="histidine_hisI"/>
    <property type="match status" value="1"/>
</dbReference>
<dbReference type="PANTHER" id="PTHR42945">
    <property type="entry name" value="HISTIDINE BIOSYNTHESIS BIFUNCTIONAL PROTEIN"/>
    <property type="match status" value="1"/>
</dbReference>
<dbReference type="PANTHER" id="PTHR42945:SF1">
    <property type="entry name" value="HISTIDINE BIOSYNTHESIS BIFUNCTIONAL PROTEIN HIS7"/>
    <property type="match status" value="1"/>
</dbReference>
<dbReference type="Pfam" id="PF01503">
    <property type="entry name" value="PRA-PH"/>
    <property type="match status" value="1"/>
</dbReference>
<dbReference type="SUPFAM" id="SSF101386">
    <property type="entry name" value="all-alpha NTP pyrophosphatases"/>
    <property type="match status" value="1"/>
</dbReference>
<proteinExistence type="inferred from homology"/>
<comment type="catalytic activity">
    <reaction evidence="1">
        <text>1-(5-phospho-beta-D-ribosyl)-ATP + H2O = 1-(5-phospho-beta-D-ribosyl)-5'-AMP + diphosphate + H(+)</text>
        <dbReference type="Rhea" id="RHEA:22828"/>
        <dbReference type="ChEBI" id="CHEBI:15377"/>
        <dbReference type="ChEBI" id="CHEBI:15378"/>
        <dbReference type="ChEBI" id="CHEBI:33019"/>
        <dbReference type="ChEBI" id="CHEBI:59457"/>
        <dbReference type="ChEBI" id="CHEBI:73183"/>
        <dbReference type="EC" id="3.6.1.31"/>
    </reaction>
</comment>
<comment type="pathway">
    <text evidence="1">Amino-acid biosynthesis; L-histidine biosynthesis; L-histidine from 5-phospho-alpha-D-ribose 1-diphosphate: step 2/9.</text>
</comment>
<comment type="subcellular location">
    <subcellularLocation>
        <location evidence="1">Cytoplasm</location>
    </subcellularLocation>
</comment>
<comment type="similarity">
    <text evidence="1">Belongs to the PRA-PH family.</text>
</comment>
<protein>
    <recommendedName>
        <fullName evidence="1">Phosphoribosyl-ATP pyrophosphatase</fullName>
        <shortName evidence="1">PRA-PH</shortName>
        <ecNumber evidence="1">3.6.1.31</ecNumber>
    </recommendedName>
</protein>
<feature type="chain" id="PRO_1000063350" description="Phosphoribosyl-ATP pyrophosphatase">
    <location>
        <begin position="1"/>
        <end position="96"/>
    </location>
</feature>